<protein>
    <recommendedName>
        <fullName evidence="1">Small ribosomal subunit protein uS11</fullName>
    </recommendedName>
    <alternativeName>
        <fullName>40S ribosomal protein S14</fullName>
    </alternativeName>
</protein>
<accession>Q08699</accession>
<keyword id="KW-0687">Ribonucleoprotein</keyword>
<keyword id="KW-0689">Ribosomal protein</keyword>
<proteinExistence type="evidence at transcript level"/>
<sequence length="151" mass="16079">MAPRKGKAPKEEQVISLGPQVADGENVFGVAHIFASFNDTFVHVTDLSGKETIARVTGGMKVKADRDESSPYAAMLAAQDVAVRCKEIGITALHVKLRATGGNRTKTPGPGAQSALRALARSGMKIGRIEDVTPIPSDCTRRKGGRRGRRL</sequence>
<gene>
    <name type="primary">RPS14</name>
</gene>
<dbReference type="EMBL" id="X71384">
    <property type="protein sequence ID" value="CAA50506.1"/>
    <property type="molecule type" value="mRNA"/>
</dbReference>
<dbReference type="SMR" id="Q08699"/>
<dbReference type="GO" id="GO:1990904">
    <property type="term" value="C:ribonucleoprotein complex"/>
    <property type="evidence" value="ECO:0007669"/>
    <property type="project" value="UniProtKB-KW"/>
</dbReference>
<dbReference type="GO" id="GO:0005840">
    <property type="term" value="C:ribosome"/>
    <property type="evidence" value="ECO:0007669"/>
    <property type="project" value="UniProtKB-KW"/>
</dbReference>
<dbReference type="GO" id="GO:0003735">
    <property type="term" value="F:structural constituent of ribosome"/>
    <property type="evidence" value="ECO:0007669"/>
    <property type="project" value="InterPro"/>
</dbReference>
<dbReference type="GO" id="GO:0006412">
    <property type="term" value="P:translation"/>
    <property type="evidence" value="ECO:0007669"/>
    <property type="project" value="InterPro"/>
</dbReference>
<dbReference type="FunFam" id="3.30.420.80:FF:000018">
    <property type="entry name" value="40S ribosomal protein S14"/>
    <property type="match status" value="1"/>
</dbReference>
<dbReference type="Gene3D" id="3.30.420.80">
    <property type="entry name" value="Ribosomal protein S11"/>
    <property type="match status" value="1"/>
</dbReference>
<dbReference type="HAMAP" id="MF_01310">
    <property type="entry name" value="Ribosomal_uS11"/>
    <property type="match status" value="1"/>
</dbReference>
<dbReference type="InterPro" id="IPR001971">
    <property type="entry name" value="Ribosomal_uS11"/>
</dbReference>
<dbReference type="InterPro" id="IPR018102">
    <property type="entry name" value="Ribosomal_uS11_CS"/>
</dbReference>
<dbReference type="InterPro" id="IPR036967">
    <property type="entry name" value="Ribosomal_uS11_sf"/>
</dbReference>
<dbReference type="NCBIfam" id="NF007176">
    <property type="entry name" value="PRK09607.1"/>
    <property type="match status" value="1"/>
</dbReference>
<dbReference type="PANTHER" id="PTHR11759">
    <property type="entry name" value="40S RIBOSOMAL PROTEIN S14/30S RIBOSOMAL PROTEIN S11"/>
    <property type="match status" value="1"/>
</dbReference>
<dbReference type="Pfam" id="PF00411">
    <property type="entry name" value="Ribosomal_S11"/>
    <property type="match status" value="1"/>
</dbReference>
<dbReference type="PIRSF" id="PIRSF002131">
    <property type="entry name" value="Ribosomal_S11"/>
    <property type="match status" value="1"/>
</dbReference>
<dbReference type="SUPFAM" id="SSF53137">
    <property type="entry name" value="Translational machinery components"/>
    <property type="match status" value="1"/>
</dbReference>
<dbReference type="PROSITE" id="PS00054">
    <property type="entry name" value="RIBOSOMAL_S11"/>
    <property type="match status" value="1"/>
</dbReference>
<reference key="1">
    <citation type="journal article" date="1994" name="Gene">
        <title>The sequence of a cDNA encoding ribosomal protein S14 from the hydrozoan Podocoryne carnea reveals high evolutionary conservation.</title>
        <authorList>
            <person name="Aerne B.L."/>
            <person name="Baader C.D."/>
            <person name="Schmid V."/>
            <person name="Schuchert P."/>
        </authorList>
    </citation>
    <scope>NUCLEOTIDE SEQUENCE [MRNA]</scope>
</reference>
<comment type="similarity">
    <text evidence="1">Belongs to the universal ribosomal protein uS11 family.</text>
</comment>
<name>RS14_PODCA</name>
<organism>
    <name type="scientific">Podocoryna carnea</name>
    <name type="common">Hydrozoan</name>
    <dbReference type="NCBI Taxonomy" id="6096"/>
    <lineage>
        <taxon>Eukaryota</taxon>
        <taxon>Metazoa</taxon>
        <taxon>Cnidaria</taxon>
        <taxon>Hydrozoa</taxon>
        <taxon>Hydroidolina</taxon>
        <taxon>Anthoathecata</taxon>
        <taxon>Filifera</taxon>
        <taxon>Hydractiniidae</taxon>
        <taxon>Podocoryna</taxon>
    </lineage>
</organism>
<evidence type="ECO:0000305" key="1"/>
<feature type="chain" id="PRO_0000123353" description="Small ribosomal subunit protein uS11">
    <location>
        <begin position="1"/>
        <end position="151"/>
    </location>
</feature>